<proteinExistence type="inferred from homology"/>
<name>PDXT_MYCA1</name>
<gene>
    <name evidence="1" type="primary">pdxT</name>
    <name type="ordered locus">MAV_3482</name>
</gene>
<reference key="1">
    <citation type="submission" date="2006-10" db="EMBL/GenBank/DDBJ databases">
        <authorList>
            <person name="Fleischmann R.D."/>
            <person name="Dodson R.J."/>
            <person name="Haft D.H."/>
            <person name="Merkel J.S."/>
            <person name="Nelson W.C."/>
            <person name="Fraser C.M."/>
        </authorList>
    </citation>
    <scope>NUCLEOTIDE SEQUENCE [LARGE SCALE GENOMIC DNA]</scope>
    <source>
        <strain>104</strain>
    </source>
</reference>
<comment type="function">
    <text evidence="1">Catalyzes the hydrolysis of glutamine to glutamate and ammonia as part of the biosynthesis of pyridoxal 5'-phosphate. The resulting ammonia molecule is channeled to the active site of PdxS.</text>
</comment>
<comment type="catalytic activity">
    <reaction evidence="1">
        <text>aldehydo-D-ribose 5-phosphate + D-glyceraldehyde 3-phosphate + L-glutamine = pyridoxal 5'-phosphate + L-glutamate + phosphate + 3 H2O + H(+)</text>
        <dbReference type="Rhea" id="RHEA:31507"/>
        <dbReference type="ChEBI" id="CHEBI:15377"/>
        <dbReference type="ChEBI" id="CHEBI:15378"/>
        <dbReference type="ChEBI" id="CHEBI:29985"/>
        <dbReference type="ChEBI" id="CHEBI:43474"/>
        <dbReference type="ChEBI" id="CHEBI:58273"/>
        <dbReference type="ChEBI" id="CHEBI:58359"/>
        <dbReference type="ChEBI" id="CHEBI:59776"/>
        <dbReference type="ChEBI" id="CHEBI:597326"/>
        <dbReference type="EC" id="4.3.3.6"/>
    </reaction>
</comment>
<comment type="catalytic activity">
    <reaction evidence="1">
        <text>L-glutamine + H2O = L-glutamate + NH4(+)</text>
        <dbReference type="Rhea" id="RHEA:15889"/>
        <dbReference type="ChEBI" id="CHEBI:15377"/>
        <dbReference type="ChEBI" id="CHEBI:28938"/>
        <dbReference type="ChEBI" id="CHEBI:29985"/>
        <dbReference type="ChEBI" id="CHEBI:58359"/>
        <dbReference type="EC" id="3.5.1.2"/>
    </reaction>
</comment>
<comment type="pathway">
    <text evidence="1">Cofactor biosynthesis; pyridoxal 5'-phosphate biosynthesis.</text>
</comment>
<comment type="subunit">
    <text evidence="1">In the presence of PdxS, forms a dodecamer of heterodimers. Only shows activity in the heterodimer.</text>
</comment>
<comment type="similarity">
    <text evidence="1">Belongs to the glutaminase PdxT/SNO family.</text>
</comment>
<organism>
    <name type="scientific">Mycobacterium avium (strain 104)</name>
    <dbReference type="NCBI Taxonomy" id="243243"/>
    <lineage>
        <taxon>Bacteria</taxon>
        <taxon>Bacillati</taxon>
        <taxon>Actinomycetota</taxon>
        <taxon>Actinomycetes</taxon>
        <taxon>Mycobacteriales</taxon>
        <taxon>Mycobacteriaceae</taxon>
        <taxon>Mycobacterium</taxon>
        <taxon>Mycobacterium avium complex (MAC)</taxon>
    </lineage>
</organism>
<accession>A0QIC6</accession>
<sequence length="198" mass="21003">MSAPRIGVLALQGDTREHLAALREAGAESMPVRRRGELEAVDGLVIPGGESTTMSHLLKDLDLLEPLRGLLADGLPAYGACAGMILLASEILDAGAGGREALPLRAIDMTVRRNAFGRQVDSFEGDIAFAGLDVPVRAVFIRAPWVERAGDGVEVLARAAGHVVAVRQGARLATAFHPEMTGDRRIHRLFVDLVTGVV</sequence>
<keyword id="KW-0315">Glutamine amidotransferase</keyword>
<keyword id="KW-0378">Hydrolase</keyword>
<keyword id="KW-0456">Lyase</keyword>
<keyword id="KW-0663">Pyridoxal phosphate</keyword>
<evidence type="ECO:0000255" key="1">
    <source>
        <dbReference type="HAMAP-Rule" id="MF_01615"/>
    </source>
</evidence>
<dbReference type="EC" id="4.3.3.6" evidence="1"/>
<dbReference type="EC" id="3.5.1.2" evidence="1"/>
<dbReference type="EMBL" id="CP000479">
    <property type="protein sequence ID" value="ABK67821.1"/>
    <property type="molecule type" value="Genomic_DNA"/>
</dbReference>
<dbReference type="RefSeq" id="WP_011725496.1">
    <property type="nucleotide sequence ID" value="NC_008595.1"/>
</dbReference>
<dbReference type="SMR" id="A0QIC6"/>
<dbReference type="KEGG" id="mav:MAV_3482"/>
<dbReference type="HOGENOM" id="CLU_069674_2_0_11"/>
<dbReference type="UniPathway" id="UPA00245"/>
<dbReference type="Proteomes" id="UP000001574">
    <property type="component" value="Chromosome"/>
</dbReference>
<dbReference type="GO" id="GO:0005829">
    <property type="term" value="C:cytosol"/>
    <property type="evidence" value="ECO:0007669"/>
    <property type="project" value="TreeGrafter"/>
</dbReference>
<dbReference type="GO" id="GO:1903600">
    <property type="term" value="C:glutaminase complex"/>
    <property type="evidence" value="ECO:0007669"/>
    <property type="project" value="TreeGrafter"/>
</dbReference>
<dbReference type="GO" id="GO:0004359">
    <property type="term" value="F:glutaminase activity"/>
    <property type="evidence" value="ECO:0007669"/>
    <property type="project" value="UniProtKB-UniRule"/>
</dbReference>
<dbReference type="GO" id="GO:0036381">
    <property type="term" value="F:pyridoxal 5'-phosphate synthase (glutamine hydrolysing) activity"/>
    <property type="evidence" value="ECO:0007669"/>
    <property type="project" value="UniProtKB-UniRule"/>
</dbReference>
<dbReference type="GO" id="GO:0006543">
    <property type="term" value="P:glutamine catabolic process"/>
    <property type="evidence" value="ECO:0007669"/>
    <property type="project" value="UniProtKB-UniRule"/>
</dbReference>
<dbReference type="GO" id="GO:0042823">
    <property type="term" value="P:pyridoxal phosphate biosynthetic process"/>
    <property type="evidence" value="ECO:0007669"/>
    <property type="project" value="UniProtKB-UniRule"/>
</dbReference>
<dbReference type="GO" id="GO:0008614">
    <property type="term" value="P:pyridoxine metabolic process"/>
    <property type="evidence" value="ECO:0007669"/>
    <property type="project" value="TreeGrafter"/>
</dbReference>
<dbReference type="CDD" id="cd01749">
    <property type="entry name" value="GATase1_PB"/>
    <property type="match status" value="1"/>
</dbReference>
<dbReference type="FunFam" id="3.40.50.880:FF:000010">
    <property type="entry name" value="uncharacterized protein LOC100176842 isoform X2"/>
    <property type="match status" value="1"/>
</dbReference>
<dbReference type="Gene3D" id="3.40.50.880">
    <property type="match status" value="1"/>
</dbReference>
<dbReference type="HAMAP" id="MF_01615">
    <property type="entry name" value="PdxT"/>
    <property type="match status" value="1"/>
</dbReference>
<dbReference type="InterPro" id="IPR029062">
    <property type="entry name" value="Class_I_gatase-like"/>
</dbReference>
<dbReference type="InterPro" id="IPR002161">
    <property type="entry name" value="PdxT/SNO"/>
</dbReference>
<dbReference type="InterPro" id="IPR021196">
    <property type="entry name" value="PdxT/SNO_CS"/>
</dbReference>
<dbReference type="NCBIfam" id="TIGR03800">
    <property type="entry name" value="PLP_synth_Pdx2"/>
    <property type="match status" value="1"/>
</dbReference>
<dbReference type="PANTHER" id="PTHR31559">
    <property type="entry name" value="PYRIDOXAL 5'-PHOSPHATE SYNTHASE SUBUNIT SNO"/>
    <property type="match status" value="1"/>
</dbReference>
<dbReference type="PANTHER" id="PTHR31559:SF0">
    <property type="entry name" value="PYRIDOXAL 5'-PHOSPHATE SYNTHASE SUBUNIT SNO1-RELATED"/>
    <property type="match status" value="1"/>
</dbReference>
<dbReference type="Pfam" id="PF01174">
    <property type="entry name" value="SNO"/>
    <property type="match status" value="1"/>
</dbReference>
<dbReference type="PIRSF" id="PIRSF005639">
    <property type="entry name" value="Glut_amidoT_SNO"/>
    <property type="match status" value="1"/>
</dbReference>
<dbReference type="SUPFAM" id="SSF52317">
    <property type="entry name" value="Class I glutamine amidotransferase-like"/>
    <property type="match status" value="1"/>
</dbReference>
<dbReference type="PROSITE" id="PS01236">
    <property type="entry name" value="PDXT_SNO_1"/>
    <property type="match status" value="1"/>
</dbReference>
<dbReference type="PROSITE" id="PS51130">
    <property type="entry name" value="PDXT_SNO_2"/>
    <property type="match status" value="1"/>
</dbReference>
<feature type="chain" id="PRO_0000293003" description="Pyridoxal 5'-phosphate synthase subunit PdxT">
    <location>
        <begin position="1"/>
        <end position="198"/>
    </location>
</feature>
<feature type="active site" description="Nucleophile" evidence="1">
    <location>
        <position position="81"/>
    </location>
</feature>
<feature type="active site" description="Charge relay system" evidence="1">
    <location>
        <position position="177"/>
    </location>
</feature>
<feature type="active site" description="Charge relay system" evidence="1">
    <location>
        <position position="179"/>
    </location>
</feature>
<feature type="binding site" evidence="1">
    <location>
        <begin position="49"/>
        <end position="51"/>
    </location>
    <ligand>
        <name>L-glutamine</name>
        <dbReference type="ChEBI" id="CHEBI:58359"/>
    </ligand>
</feature>
<feature type="binding site" evidence="1">
    <location>
        <position position="113"/>
    </location>
    <ligand>
        <name>L-glutamine</name>
        <dbReference type="ChEBI" id="CHEBI:58359"/>
    </ligand>
</feature>
<feature type="binding site" evidence="1">
    <location>
        <begin position="141"/>
        <end position="142"/>
    </location>
    <ligand>
        <name>L-glutamine</name>
        <dbReference type="ChEBI" id="CHEBI:58359"/>
    </ligand>
</feature>
<protein>
    <recommendedName>
        <fullName evidence="1">Pyridoxal 5'-phosphate synthase subunit PdxT</fullName>
        <ecNumber evidence="1">4.3.3.6</ecNumber>
    </recommendedName>
    <alternativeName>
        <fullName evidence="1">Pdx2</fullName>
    </alternativeName>
    <alternativeName>
        <fullName evidence="1">Pyridoxal 5'-phosphate synthase glutaminase subunit</fullName>
        <ecNumber evidence="1">3.5.1.2</ecNumber>
    </alternativeName>
</protein>